<feature type="chain" id="PRO_0000174198" description="Small ribosomal subunit protein eS7">
    <location>
        <begin position="1"/>
        <end position="192"/>
    </location>
</feature>
<feature type="sequence conflict" description="In Ref. 1; AAA03087." evidence="1" ref="1">
    <original>RTL</original>
    <variation>PNV</variation>
    <location>
        <begin position="118"/>
        <end position="120"/>
    </location>
</feature>
<accession>P33514</accession>
<accession>Q7PPS4</accession>
<organism>
    <name type="scientific">Anopheles gambiae</name>
    <name type="common">African malaria mosquito</name>
    <dbReference type="NCBI Taxonomy" id="7165"/>
    <lineage>
        <taxon>Eukaryota</taxon>
        <taxon>Metazoa</taxon>
        <taxon>Ecdysozoa</taxon>
        <taxon>Arthropoda</taxon>
        <taxon>Hexapoda</taxon>
        <taxon>Insecta</taxon>
        <taxon>Pterygota</taxon>
        <taxon>Neoptera</taxon>
        <taxon>Endopterygota</taxon>
        <taxon>Diptera</taxon>
        <taxon>Nematocera</taxon>
        <taxon>Culicoidea</taxon>
        <taxon>Culicidae</taxon>
        <taxon>Anophelinae</taxon>
        <taxon>Anopheles</taxon>
    </lineage>
</organism>
<comment type="similarity">
    <text evidence="1">Belongs to the eukaryotic ribosomal protein eS7 family.</text>
</comment>
<gene>
    <name type="primary">RpS7</name>
    <name type="ORF">AGAP010592</name>
</gene>
<evidence type="ECO:0000305" key="1"/>
<name>RS7_ANOGA</name>
<protein>
    <recommendedName>
        <fullName evidence="1">Small ribosomal subunit protein eS7</fullName>
    </recommendedName>
    <alternativeName>
        <fullName>40S ribosomal protein S7</fullName>
    </alternativeName>
</protein>
<sequence>MVFGSKVIKAGNGEPDAFETQIGQAILELEMNSDLKPQLRDLYITRAREVEFNNKKAIIIYVPVPKQKAFQKVQTRLVRELEKKFSGKHVVFIAERRILPKPMRGRRDPNKQKRPRSRTLTAVYDAILEDLVFPAEVVGKRIRVKLDGSQLIKVHLDKNQQTTIEHKVDTFASVYKKLTGRDVTFEFPENYL</sequence>
<proteinExistence type="evidence at transcript level"/>
<keyword id="KW-1185">Reference proteome</keyword>
<keyword id="KW-0687">Ribonucleoprotein</keyword>
<keyword id="KW-0689">Ribosomal protein</keyword>
<reference key="1">
    <citation type="journal article" date="1993" name="Nucleic Acids Res.">
        <title>Sequence of a cDNA from the mosquito Anopheles gambiae encoding a homologue of human ribosomal protein S7.</title>
        <authorList>
            <person name="Salazar C.E."/>
            <person name="Mills-Hamm D.M."/>
            <person name="Kumar V."/>
            <person name="Collins F.H."/>
        </authorList>
    </citation>
    <scope>NUCLEOTIDE SEQUENCE [MRNA]</scope>
    <source>
        <strain>G3</strain>
    </source>
</reference>
<reference key="2">
    <citation type="journal article" date="2002" name="Science">
        <title>The genome sequence of the malaria mosquito Anopheles gambiae.</title>
        <authorList>
            <person name="Holt R.A."/>
            <person name="Subramanian G.M."/>
            <person name="Halpern A."/>
            <person name="Sutton G.G."/>
            <person name="Charlab R."/>
            <person name="Nusskern D.R."/>
            <person name="Wincker P."/>
            <person name="Clark A.G."/>
            <person name="Ribeiro J.M.C."/>
            <person name="Wides R."/>
            <person name="Salzberg S.L."/>
            <person name="Loftus B.J."/>
            <person name="Yandell M.D."/>
            <person name="Majoros W.H."/>
            <person name="Rusch D.B."/>
            <person name="Lai Z."/>
            <person name="Kraft C.L."/>
            <person name="Abril J.F."/>
            <person name="Anthouard V."/>
            <person name="Arensburger P."/>
            <person name="Atkinson P.W."/>
            <person name="Baden H."/>
            <person name="de Berardinis V."/>
            <person name="Baldwin D."/>
            <person name="Benes V."/>
            <person name="Biedler J."/>
            <person name="Blass C."/>
            <person name="Bolanos R."/>
            <person name="Boscus D."/>
            <person name="Barnstead M."/>
            <person name="Cai S."/>
            <person name="Center A."/>
            <person name="Chaturverdi K."/>
            <person name="Christophides G.K."/>
            <person name="Chrystal M.A.M."/>
            <person name="Clamp M."/>
            <person name="Cravchik A."/>
            <person name="Curwen V."/>
            <person name="Dana A."/>
            <person name="Delcher A."/>
            <person name="Dew I."/>
            <person name="Evans C.A."/>
            <person name="Flanigan M."/>
            <person name="Grundschober-Freimoser A."/>
            <person name="Friedli L."/>
            <person name="Gu Z."/>
            <person name="Guan P."/>
            <person name="Guigo R."/>
            <person name="Hillenmeyer M.E."/>
            <person name="Hladun S.L."/>
            <person name="Hogan J.R."/>
            <person name="Hong Y.S."/>
            <person name="Hoover J."/>
            <person name="Jaillon O."/>
            <person name="Ke Z."/>
            <person name="Kodira C.D."/>
            <person name="Kokoza E."/>
            <person name="Koutsos A."/>
            <person name="Letunic I."/>
            <person name="Levitsky A.A."/>
            <person name="Liang Y."/>
            <person name="Lin J.-J."/>
            <person name="Lobo N.F."/>
            <person name="Lopez J.R."/>
            <person name="Malek J.A."/>
            <person name="McIntosh T.C."/>
            <person name="Meister S."/>
            <person name="Miller J.R."/>
            <person name="Mobarry C."/>
            <person name="Mongin E."/>
            <person name="Murphy S.D."/>
            <person name="O'Brochta D.A."/>
            <person name="Pfannkoch C."/>
            <person name="Qi R."/>
            <person name="Regier M.A."/>
            <person name="Remington K."/>
            <person name="Shao H."/>
            <person name="Sharakhova M.V."/>
            <person name="Sitter C.D."/>
            <person name="Shetty J."/>
            <person name="Smith T.J."/>
            <person name="Strong R."/>
            <person name="Sun J."/>
            <person name="Thomasova D."/>
            <person name="Ton L.Q."/>
            <person name="Topalis P."/>
            <person name="Tu Z.J."/>
            <person name="Unger M.F."/>
            <person name="Walenz B."/>
            <person name="Wang A.H."/>
            <person name="Wang J."/>
            <person name="Wang M."/>
            <person name="Wang X."/>
            <person name="Woodford K.J."/>
            <person name="Wortman J.R."/>
            <person name="Wu M."/>
            <person name="Yao A."/>
            <person name="Zdobnov E.M."/>
            <person name="Zhang H."/>
            <person name="Zhao Q."/>
            <person name="Zhao S."/>
            <person name="Zhu S.C."/>
            <person name="Zhimulev I."/>
            <person name="Coluzzi M."/>
            <person name="della Torre A."/>
            <person name="Roth C.W."/>
            <person name="Louis C."/>
            <person name="Kalush F."/>
            <person name="Mural R.J."/>
            <person name="Myers E.W."/>
            <person name="Adams M.D."/>
            <person name="Smith H.O."/>
            <person name="Broder S."/>
            <person name="Gardner M.J."/>
            <person name="Fraser C.M."/>
            <person name="Birney E."/>
            <person name="Bork P."/>
            <person name="Brey P.T."/>
            <person name="Venter J.C."/>
            <person name="Weissenbach J."/>
            <person name="Kafatos F.C."/>
            <person name="Collins F.H."/>
            <person name="Hoffman S.L."/>
        </authorList>
    </citation>
    <scope>NUCLEOTIDE SEQUENCE [LARGE SCALE GENOMIC DNA]</scope>
    <source>
        <strain>PEST</strain>
    </source>
</reference>
<dbReference type="EMBL" id="L20837">
    <property type="protein sequence ID" value="AAA03087.1"/>
    <property type="molecule type" value="mRNA"/>
</dbReference>
<dbReference type="EMBL" id="AAAB01008933">
    <property type="protein sequence ID" value="EAA09923.4"/>
    <property type="molecule type" value="Genomic_DNA"/>
</dbReference>
<dbReference type="PIR" id="S37615">
    <property type="entry name" value="S37615"/>
</dbReference>
<dbReference type="SMR" id="P33514"/>
<dbReference type="FunCoup" id="P33514">
    <property type="interactions" value="2006"/>
</dbReference>
<dbReference type="STRING" id="7165.P33514"/>
<dbReference type="PaxDb" id="7165-AGAP010592-PA"/>
<dbReference type="EnsemblMetazoa" id="AGAP010592-RA">
    <property type="protein sequence ID" value="AGAP010592-PA"/>
    <property type="gene ID" value="AGAP010592"/>
</dbReference>
<dbReference type="GeneID" id="1275319"/>
<dbReference type="KEGG" id="aga:1275319"/>
<dbReference type="CTD" id="6201"/>
<dbReference type="VEuPathDB" id="VectorBase:AGAMI1_009303"/>
<dbReference type="VEuPathDB" id="VectorBase:AGAP010592"/>
<dbReference type="eggNOG" id="KOG3320">
    <property type="taxonomic scope" value="Eukaryota"/>
</dbReference>
<dbReference type="HOGENOM" id="CLU_088621_1_2_1"/>
<dbReference type="InParanoid" id="P33514"/>
<dbReference type="OMA" id="AAYHKVQ"/>
<dbReference type="PhylomeDB" id="P33514"/>
<dbReference type="Proteomes" id="UP000007062">
    <property type="component" value="Chromosome 3L"/>
</dbReference>
<dbReference type="GO" id="GO:0022627">
    <property type="term" value="C:cytosolic small ribosomal subunit"/>
    <property type="evidence" value="ECO:0000318"/>
    <property type="project" value="GO_Central"/>
</dbReference>
<dbReference type="GO" id="GO:0032040">
    <property type="term" value="C:small-subunit processome"/>
    <property type="evidence" value="ECO:0000318"/>
    <property type="project" value="GO_Central"/>
</dbReference>
<dbReference type="GO" id="GO:0003735">
    <property type="term" value="F:structural constituent of ribosome"/>
    <property type="evidence" value="ECO:0007669"/>
    <property type="project" value="InterPro"/>
</dbReference>
<dbReference type="GO" id="GO:0042274">
    <property type="term" value="P:ribosomal small subunit biogenesis"/>
    <property type="evidence" value="ECO:0000318"/>
    <property type="project" value="GO_Central"/>
</dbReference>
<dbReference type="GO" id="GO:0006364">
    <property type="term" value="P:rRNA processing"/>
    <property type="evidence" value="ECO:0000318"/>
    <property type="project" value="GO_Central"/>
</dbReference>
<dbReference type="GO" id="GO:0006412">
    <property type="term" value="P:translation"/>
    <property type="evidence" value="ECO:0007669"/>
    <property type="project" value="InterPro"/>
</dbReference>
<dbReference type="InterPro" id="IPR000554">
    <property type="entry name" value="Ribosomal_eS7"/>
</dbReference>
<dbReference type="InterPro" id="IPR047861">
    <property type="entry name" value="Ribosomal_eS7_CS"/>
</dbReference>
<dbReference type="PANTHER" id="PTHR11278">
    <property type="entry name" value="40S RIBOSOMAL PROTEIN S7"/>
    <property type="match status" value="1"/>
</dbReference>
<dbReference type="PANTHER" id="PTHR11278:SF0">
    <property type="entry name" value="SMALL RIBOSOMAL SUBUNIT PROTEIN ES7"/>
    <property type="match status" value="1"/>
</dbReference>
<dbReference type="Pfam" id="PF01251">
    <property type="entry name" value="Ribosomal_S7e"/>
    <property type="match status" value="1"/>
</dbReference>
<dbReference type="PROSITE" id="PS00948">
    <property type="entry name" value="RIBOSOMAL_S7E"/>
    <property type="match status" value="1"/>
</dbReference>